<evidence type="ECO:0000250" key="1">
    <source>
        <dbReference type="UniProtKB" id="A0A2R2JFI5"/>
    </source>
</evidence>
<evidence type="ECO:0000269" key="2">
    <source>
    </source>
</evidence>
<evidence type="ECO:0000303" key="3">
    <source>
    </source>
</evidence>
<evidence type="ECO:0000305" key="4"/>
<evidence type="ECO:0000305" key="5">
    <source>
    </source>
</evidence>
<protein>
    <recommendedName>
        <fullName evidence="3">Methyltransferase/ribosomally synthesized type I borosin cyclic peptide precursor mroMa1</fullName>
    </recommendedName>
    <alternativeName>
        <fullName evidence="3">Type I borosin cyclic peptide biosynthesis cluster protein MA1</fullName>
    </alternativeName>
    <component>
        <recommendedName>
            <fullName evidence="3">N-methyltranferase mroM1</fullName>
            <ecNumber evidence="2">2.1.1.-</ecNumber>
        </recommendedName>
    </component>
    <component>
        <recommendedName>
            <fullName evidence="3">Ribosomally synthesized type I borosin core peptide</fullName>
        </recommendedName>
    </component>
</protein>
<comment type="function">
    <text evidence="1 2">Fusion protein of the methyltransferase mroM1 and a type I borosin core peptide; part of the gene cluster that mediates the biosynthesis of a type I borosin, a highly methylated cyclic peptide with potent biological activities (PubMed:31117659). Type I borosins derive from the C-terminus of the fusion protein, and it is the same protein that methylates its own C-terminus using S-adenosyl methionine (SAM) (PubMed:31117659). The C-terminus is subsequently cleaved off and macrocyclized by a prolyloligopeptidase to give the final product (By similarity).</text>
</comment>
<comment type="pathway">
    <text evidence="5">Secondary metabolite biosynthesis.</text>
</comment>
<comment type="subunit">
    <text evidence="2">Homodimer.</text>
</comment>
<comment type="domain">
    <text evidence="5">Within the homodimer, the clasp domain wraps around the adjacent subunit to position the core peptide into the other subunit's active site for iterative intermolecular methylation.</text>
</comment>
<comment type="PTM">
    <text evidence="2 4">MroMA automethylates at Ile-391, Ile-392, Tyr-393, Ile-394 and Val-395 before being processed by the a prolyloligopeptidase which likely forms a peptidyl ester upon removal of the follower propeptide, which then undergoes macrocyclization with the N-terminus of the modified core peptide (PubMed:31117659). Peptide backbone alpha-N-methylations change the physicochemical properties of amide bonds to provide structural constraints and other favorable characteristics including biological membrane permeability to peptides (Probable).</text>
</comment>
<comment type="similarity">
    <text evidence="4">In the N-terminal section; belongs to the precorrin methyltransferase family.</text>
</comment>
<reference key="1">
    <citation type="journal article" date="2019" name="J. Am. Chem. Soc.">
        <title>Distinct autocatalytic alpha-N-methylating precursors expand the borosin RiPP family of peptide natural products.</title>
        <authorList>
            <person name="Quijano M.R."/>
            <person name="Zach C."/>
            <person name="Miller F.S."/>
            <person name="Lee A.R."/>
            <person name="Imani A.S."/>
            <person name="Kuenzler M."/>
            <person name="Freeman M.F."/>
        </authorList>
    </citation>
    <scope>FUNCTION</scope>
    <scope>SUBUNIT</scope>
    <scope>CATALYTIC ACTIVITY</scope>
    <scope>DOMAIN</scope>
    <scope>METHYLATION AT ILE-391; ILE-392; TYR-393; ILE-394 AND VAL-395</scope>
</reference>
<feature type="chain" id="PRO_0000458506" description="N-methyltranferase mroM1" evidence="5">
    <location>
        <begin position="1"/>
        <end position="388"/>
    </location>
</feature>
<feature type="peptide" id="PRO_0000458507" description="Ribosomally synthesized type I borosin core peptide" evidence="5">
    <location>
        <begin position="389"/>
        <end position="397"/>
    </location>
</feature>
<feature type="region of interest" description="Methyltransferase domain" evidence="1">
    <location>
        <begin position="1"/>
        <end position="246"/>
    </location>
</feature>
<feature type="region of interest" description="Clasp domain" evidence="1">
    <location>
        <begin position="247"/>
        <end position="365"/>
    </location>
</feature>
<feature type="region of interest" description="Precursor leader" evidence="1">
    <location>
        <begin position="366"/>
        <end position="388"/>
    </location>
</feature>
<feature type="active site" evidence="1">
    <location>
        <position position="70"/>
    </location>
</feature>
<feature type="active site" evidence="1">
    <location>
        <position position="74"/>
    </location>
</feature>
<feature type="active site" evidence="1">
    <location>
        <position position="96"/>
    </location>
</feature>
<feature type="binding site" evidence="1">
    <location>
        <position position="96"/>
    </location>
    <ligand>
        <name>S-adenosyl-L-methionine</name>
        <dbReference type="ChEBI" id="CHEBI:59789"/>
    </ligand>
</feature>
<feature type="binding site" evidence="1">
    <location>
        <position position="98"/>
    </location>
    <ligand>
        <name>S-adenosyl-L-methionine</name>
        <dbReference type="ChEBI" id="CHEBI:59789"/>
    </ligand>
</feature>
<feature type="binding site" evidence="1">
    <location>
        <position position="101"/>
    </location>
    <ligand>
        <name>S-adenosyl-L-methionine</name>
        <dbReference type="ChEBI" id="CHEBI:59789"/>
    </ligand>
</feature>
<feature type="binding site" evidence="1">
    <location>
        <position position="128"/>
    </location>
    <ligand>
        <name>S-adenosyl-L-methionine</name>
        <dbReference type="ChEBI" id="CHEBI:59789"/>
    </ligand>
</feature>
<feature type="binding site" evidence="1">
    <location>
        <position position="170"/>
    </location>
    <ligand>
        <name>S-adenosyl-L-methionine</name>
        <dbReference type="ChEBI" id="CHEBI:59789"/>
    </ligand>
</feature>
<feature type="binding site" evidence="1">
    <location>
        <position position="208"/>
    </location>
    <ligand>
        <name>S-adenosyl-L-methionine</name>
        <dbReference type="ChEBI" id="CHEBI:59789"/>
    </ligand>
</feature>
<feature type="binding site" evidence="1">
    <location>
        <position position="239"/>
    </location>
    <ligand>
        <name>S-adenosyl-L-methionine</name>
        <dbReference type="ChEBI" id="CHEBI:59789"/>
    </ligand>
</feature>
<feature type="binding site" evidence="1">
    <location>
        <position position="240"/>
    </location>
    <ligand>
        <name>S-adenosyl-L-methionine</name>
        <dbReference type="ChEBI" id="CHEBI:59789"/>
    </ligand>
</feature>
<feature type="modified residue" description="N-methylisoleucine" evidence="2">
    <location>
        <position position="391"/>
    </location>
</feature>
<feature type="modified residue" description="N-methylisoleucine" evidence="2">
    <location>
        <position position="392"/>
    </location>
</feature>
<feature type="modified residue" description="N-methyltyrosine" evidence="2">
    <location>
        <position position="393"/>
    </location>
</feature>
<feature type="modified residue" description="N-methylisoleucine" evidence="2">
    <location>
        <position position="394"/>
    </location>
</feature>
<feature type="modified residue" description="N-methylvaline" evidence="2">
    <location>
        <position position="395"/>
    </location>
</feature>
<organism>
    <name type="scientific">Mycena rosella</name>
    <name type="common">Pink bonnet</name>
    <name type="synonym">Agaricus rosellus</name>
    <dbReference type="NCBI Taxonomy" id="1033263"/>
    <lineage>
        <taxon>Eukaryota</taxon>
        <taxon>Fungi</taxon>
        <taxon>Dikarya</taxon>
        <taxon>Basidiomycota</taxon>
        <taxon>Agaricomycotina</taxon>
        <taxon>Agaricomycetes</taxon>
        <taxon>Agaricomycetidae</taxon>
        <taxon>Agaricales</taxon>
        <taxon>Marasmiineae</taxon>
        <taxon>Mycenaceae</taxon>
        <taxon>Mycena</taxon>
    </lineage>
</organism>
<keyword id="KW-0488">Methylation</keyword>
<keyword id="KW-0489">Methyltransferase</keyword>
<keyword id="KW-0949">S-adenosyl-L-methionine</keyword>
<keyword id="KW-0808">Transferase</keyword>
<accession>P9WEN2</accession>
<proteinExistence type="evidence at protein level"/>
<sequence length="397" mass="43632">MALKKPGSLTIAGSGIASIGHITLETLALIKEADKIFYAVTDPATECYIQENSRGDHFDLTTFYDTNKKRYESYVQMSEVMLRDVRAGRNVLGIFYGHPGVFVAPSHRAIAIAREEGFQAKMLPGISAEDYMFADLGFDPSTYGCMTQEATELLVRNKKLDPSIHNIIWQVGSVGVDTMVFDNGKFHLLVERLEKDFGLDHKIQHYIGAILPQSVTVKDTFAIRDLRKEEVLKQFTTTSTFYVPPRTPAPIDPKAVQALGLPATVTKGAQDWTGFQSVSPAYGPDEMRAVAALDSFVPSQEKAVVHASRAMQSLMVDLALRPALLEQYKADPVAFANTRNGLTAQEKFALGLKKPGPIFVVMRQLPSAIASGQEPSQEEIARADDATAFIIIYIVQG</sequence>
<dbReference type="EC" id="2.1.1.-" evidence="2"/>
<dbReference type="SMR" id="P9WEN2"/>
<dbReference type="iPTMnet" id="P9WEN2"/>
<dbReference type="OrthoDB" id="4623364at2759"/>
<dbReference type="GO" id="GO:0008168">
    <property type="term" value="F:methyltransferase activity"/>
    <property type="evidence" value="ECO:0007669"/>
    <property type="project" value="UniProtKB-KW"/>
</dbReference>
<dbReference type="GO" id="GO:0032259">
    <property type="term" value="P:methylation"/>
    <property type="evidence" value="ECO:0007669"/>
    <property type="project" value="UniProtKB-KW"/>
</dbReference>
<dbReference type="CDD" id="cd19916">
    <property type="entry name" value="OphMA_like"/>
    <property type="match status" value="1"/>
</dbReference>
<dbReference type="Gene3D" id="3.40.1010.10">
    <property type="entry name" value="Cobalt-precorrin-4 Transmethylase, Domain 1"/>
    <property type="match status" value="1"/>
</dbReference>
<dbReference type="InterPro" id="IPR000878">
    <property type="entry name" value="4pyrrol_Mease"/>
</dbReference>
<dbReference type="InterPro" id="IPR035996">
    <property type="entry name" value="4pyrrol_Methylase_sf"/>
</dbReference>
<dbReference type="InterPro" id="IPR014777">
    <property type="entry name" value="4pyrrole_Mease_sub1"/>
</dbReference>
<dbReference type="Pfam" id="PF00590">
    <property type="entry name" value="TP_methylase"/>
    <property type="match status" value="1"/>
</dbReference>
<dbReference type="SUPFAM" id="SSF53790">
    <property type="entry name" value="Tetrapyrrole methylase"/>
    <property type="match status" value="1"/>
</dbReference>
<name>MROM1_MYCRO</name>